<name>COQ4_ARTOC</name>
<proteinExistence type="inferred from homology"/>
<accession>C5FZH5</accession>
<dbReference type="EC" id="4.1.1.130" evidence="1"/>
<dbReference type="EMBL" id="DS995708">
    <property type="protein sequence ID" value="EEQ35278.1"/>
    <property type="molecule type" value="Genomic_DNA"/>
</dbReference>
<dbReference type="RefSeq" id="XP_002843014.1">
    <property type="nucleotide sequence ID" value="XM_002842968.1"/>
</dbReference>
<dbReference type="SMR" id="C5FZH5"/>
<dbReference type="STRING" id="554155.C5FZH5"/>
<dbReference type="GeneID" id="9227872"/>
<dbReference type="VEuPathDB" id="FungiDB:MCYG_08097"/>
<dbReference type="eggNOG" id="KOG3244">
    <property type="taxonomic scope" value="Eukaryota"/>
</dbReference>
<dbReference type="HOGENOM" id="CLU_061241_0_0_1"/>
<dbReference type="OMA" id="YYERHFH"/>
<dbReference type="OrthoDB" id="4249at2759"/>
<dbReference type="UniPathway" id="UPA00232"/>
<dbReference type="Proteomes" id="UP000002035">
    <property type="component" value="Unassembled WGS sequence"/>
</dbReference>
<dbReference type="GO" id="GO:0031314">
    <property type="term" value="C:extrinsic component of mitochondrial inner membrane"/>
    <property type="evidence" value="ECO:0007669"/>
    <property type="project" value="UniProtKB-UniRule"/>
</dbReference>
<dbReference type="GO" id="GO:0006744">
    <property type="term" value="P:ubiquinone biosynthetic process"/>
    <property type="evidence" value="ECO:0007669"/>
    <property type="project" value="UniProtKB-UniRule"/>
</dbReference>
<dbReference type="HAMAP" id="MF_03111">
    <property type="entry name" value="Coq4"/>
    <property type="match status" value="1"/>
</dbReference>
<dbReference type="InterPro" id="IPR007715">
    <property type="entry name" value="Coq4"/>
</dbReference>
<dbReference type="InterPro" id="IPR027540">
    <property type="entry name" value="Coq4_euk"/>
</dbReference>
<dbReference type="PANTHER" id="PTHR12922">
    <property type="entry name" value="UBIQUINONE BIOSYNTHESIS PROTEIN"/>
    <property type="match status" value="1"/>
</dbReference>
<dbReference type="PANTHER" id="PTHR12922:SF7">
    <property type="entry name" value="UBIQUINONE BIOSYNTHESIS PROTEIN COQ4 HOMOLOG, MITOCHONDRIAL"/>
    <property type="match status" value="1"/>
</dbReference>
<dbReference type="Pfam" id="PF05019">
    <property type="entry name" value="Coq4"/>
    <property type="match status" value="1"/>
</dbReference>
<feature type="transit peptide" description="Mitochondrion" evidence="1">
    <location>
        <begin position="1"/>
        <end position="17"/>
    </location>
</feature>
<feature type="chain" id="PRO_0000388120" description="Ubiquinone biosynthesis protein COQ4, mitochondrial">
    <location>
        <begin position="18"/>
        <end position="267"/>
    </location>
</feature>
<feature type="binding site" evidence="1">
    <location>
        <position position="153"/>
    </location>
    <ligand>
        <name>Zn(2+)</name>
        <dbReference type="ChEBI" id="CHEBI:29105"/>
    </ligand>
</feature>
<feature type="binding site" evidence="1">
    <location>
        <position position="154"/>
    </location>
    <ligand>
        <name>Zn(2+)</name>
        <dbReference type="ChEBI" id="CHEBI:29105"/>
    </ligand>
</feature>
<feature type="binding site" evidence="1">
    <location>
        <position position="157"/>
    </location>
    <ligand>
        <name>Zn(2+)</name>
        <dbReference type="ChEBI" id="CHEBI:29105"/>
    </ligand>
</feature>
<feature type="binding site" evidence="1">
    <location>
        <position position="169"/>
    </location>
    <ligand>
        <name>Zn(2+)</name>
        <dbReference type="ChEBI" id="CHEBI:29105"/>
    </ligand>
</feature>
<gene>
    <name evidence="1" type="primary">COQ4</name>
    <name type="ORF">MCYG_08097</name>
</gene>
<reference key="1">
    <citation type="journal article" date="2012" name="MBio">
        <title>Comparative genome analysis of Trichophyton rubrum and related dermatophytes reveals candidate genes involved in infection.</title>
        <authorList>
            <person name="Martinez D.A."/>
            <person name="Oliver B.G."/>
            <person name="Graeser Y."/>
            <person name="Goldberg J.M."/>
            <person name="Li W."/>
            <person name="Martinez-Rossi N.M."/>
            <person name="Monod M."/>
            <person name="Shelest E."/>
            <person name="Barton R.C."/>
            <person name="Birch E."/>
            <person name="Brakhage A.A."/>
            <person name="Chen Z."/>
            <person name="Gurr S.J."/>
            <person name="Heiman D."/>
            <person name="Heitman J."/>
            <person name="Kosti I."/>
            <person name="Rossi A."/>
            <person name="Saif S."/>
            <person name="Samalova M."/>
            <person name="Saunders C.W."/>
            <person name="Shea T."/>
            <person name="Summerbell R.C."/>
            <person name="Xu J."/>
            <person name="Young S."/>
            <person name="Zeng Q."/>
            <person name="Birren B.W."/>
            <person name="Cuomo C.A."/>
            <person name="White T.C."/>
        </authorList>
    </citation>
    <scope>NUCLEOTIDE SEQUENCE [LARGE SCALE GENOMIC DNA]</scope>
    <source>
        <strain>ATCC MYA-4605 / CBS 113480</strain>
    </source>
</reference>
<keyword id="KW-0456">Lyase</keyword>
<keyword id="KW-0472">Membrane</keyword>
<keyword id="KW-0479">Metal-binding</keyword>
<keyword id="KW-0496">Mitochondrion</keyword>
<keyword id="KW-0999">Mitochondrion inner membrane</keyword>
<keyword id="KW-1185">Reference proteome</keyword>
<keyword id="KW-0809">Transit peptide</keyword>
<keyword id="KW-0831">Ubiquinone biosynthesis</keyword>
<keyword id="KW-0862">Zinc</keyword>
<organism>
    <name type="scientific">Arthroderma otae (strain ATCC MYA-4605 / CBS 113480)</name>
    <name type="common">Microsporum canis</name>
    <dbReference type="NCBI Taxonomy" id="554155"/>
    <lineage>
        <taxon>Eukaryota</taxon>
        <taxon>Fungi</taxon>
        <taxon>Dikarya</taxon>
        <taxon>Ascomycota</taxon>
        <taxon>Pezizomycotina</taxon>
        <taxon>Eurotiomycetes</taxon>
        <taxon>Eurotiomycetidae</taxon>
        <taxon>Onygenales</taxon>
        <taxon>Arthrodermataceae</taxon>
        <taxon>Microsporum</taxon>
    </lineage>
</organism>
<evidence type="ECO:0000255" key="1">
    <source>
        <dbReference type="HAMAP-Rule" id="MF_03111"/>
    </source>
</evidence>
<protein>
    <recommendedName>
        <fullName evidence="1">Ubiquinone biosynthesis protein COQ4, mitochondrial</fullName>
    </recommendedName>
    <alternativeName>
        <fullName>4-hydroxy-3-methoxy-5-polyprenylbenzoate decarboxylase</fullName>
        <ecNumber evidence="1">4.1.1.130</ecNumber>
    </alternativeName>
    <alternativeName>
        <fullName evidence="1">Coenzyme Q biosynthesis protein 4</fullName>
    </alternativeName>
</protein>
<sequence length="267" mass="30421">MSRLKIPSQLLRGGRGFSVLSRPAANYAGHVPLTPVERCTMAVGSAIGSLLNPRRHDLIATLGETTATPYFIYRLRDAMLSDPTGRRILRDRPRITSQTLSLPYLRSLPPTSLGATFASWLDREGVSPDTRSRVRYIDDEECAYVMQRYRECHDFYHAVTGLPIVVEGELALKIFEYMNTGLPMTGLSAAAVVRLKGAERQRFWDVYLPWAVRSGAGSKELICVYWEELLERDVGELRAELGIEVPPDMREMRRRHRKQKQQEKQEK</sequence>
<comment type="function">
    <text evidence="1">Lyase that catalyzes the C1-decarboxylation of 4-hydroxy-3-methoxy-5-(all-trans-polyprenyl)benzoic acid into 2-methoxy-6-(all-trans-polyprenyl)phenol during ubiquinone biosynthesis.</text>
</comment>
<comment type="catalytic activity">
    <reaction evidence="1">
        <text>a 4-hydroxy-3-methoxy-5-(all-trans-polyprenyl)benzoate + H(+) = a 2-methoxy-6-(all-trans-polyprenyl)phenol + CO2</text>
        <dbReference type="Rhea" id="RHEA:81179"/>
        <dbReference type="Rhea" id="RHEA-COMP:9551"/>
        <dbReference type="Rhea" id="RHEA-COMP:10931"/>
        <dbReference type="ChEBI" id="CHEBI:15378"/>
        <dbReference type="ChEBI" id="CHEBI:16526"/>
        <dbReference type="ChEBI" id="CHEBI:62731"/>
        <dbReference type="ChEBI" id="CHEBI:84443"/>
        <dbReference type="EC" id="4.1.1.130"/>
    </reaction>
</comment>
<comment type="cofactor">
    <cofactor evidence="1">
        <name>Zn(2+)</name>
        <dbReference type="ChEBI" id="CHEBI:29105"/>
    </cofactor>
</comment>
<comment type="pathway">
    <text evidence="1">Cofactor biosynthesis; ubiquinone biosynthesis.</text>
</comment>
<comment type="subunit">
    <text evidence="1">Component of a multi-subunit COQ enzyme complex, composed of at least COQ3, COQ4, COQ5, COQ6, COQ7 and COQ9.</text>
</comment>
<comment type="subcellular location">
    <subcellularLocation>
        <location evidence="1">Mitochondrion inner membrane</location>
        <topology evidence="1">Peripheral membrane protein</topology>
        <orientation evidence="1">Matrix side</orientation>
    </subcellularLocation>
</comment>
<comment type="similarity">
    <text evidence="1">Belongs to the COQ4 family.</text>
</comment>